<accession>A4IX70</accession>
<name>RL35_FRATW</name>
<keyword id="KW-0687">Ribonucleoprotein</keyword>
<keyword id="KW-0689">Ribosomal protein</keyword>
<dbReference type="EMBL" id="CP000608">
    <property type="protein sequence ID" value="ABO46522.1"/>
    <property type="molecule type" value="Genomic_DNA"/>
</dbReference>
<dbReference type="RefSeq" id="WP_003016672.1">
    <property type="nucleotide sequence ID" value="NC_009257.1"/>
</dbReference>
<dbReference type="SMR" id="A4IX70"/>
<dbReference type="KEGG" id="ftw:FTW_0614"/>
<dbReference type="HOGENOM" id="CLU_169643_1_1_6"/>
<dbReference type="GO" id="GO:0022625">
    <property type="term" value="C:cytosolic large ribosomal subunit"/>
    <property type="evidence" value="ECO:0007669"/>
    <property type="project" value="TreeGrafter"/>
</dbReference>
<dbReference type="GO" id="GO:0003735">
    <property type="term" value="F:structural constituent of ribosome"/>
    <property type="evidence" value="ECO:0007669"/>
    <property type="project" value="InterPro"/>
</dbReference>
<dbReference type="GO" id="GO:0006412">
    <property type="term" value="P:translation"/>
    <property type="evidence" value="ECO:0007669"/>
    <property type="project" value="UniProtKB-UniRule"/>
</dbReference>
<dbReference type="FunFam" id="4.10.410.60:FF:000001">
    <property type="entry name" value="50S ribosomal protein L35"/>
    <property type="match status" value="1"/>
</dbReference>
<dbReference type="Gene3D" id="4.10.410.60">
    <property type="match status" value="1"/>
</dbReference>
<dbReference type="HAMAP" id="MF_00514">
    <property type="entry name" value="Ribosomal_bL35"/>
    <property type="match status" value="1"/>
</dbReference>
<dbReference type="InterPro" id="IPR001706">
    <property type="entry name" value="Ribosomal_bL35"/>
</dbReference>
<dbReference type="InterPro" id="IPR021137">
    <property type="entry name" value="Ribosomal_bL35-like"/>
</dbReference>
<dbReference type="InterPro" id="IPR018265">
    <property type="entry name" value="Ribosomal_bL35_CS"/>
</dbReference>
<dbReference type="InterPro" id="IPR037229">
    <property type="entry name" value="Ribosomal_bL35_sf"/>
</dbReference>
<dbReference type="NCBIfam" id="TIGR00001">
    <property type="entry name" value="rpmI_bact"/>
    <property type="match status" value="1"/>
</dbReference>
<dbReference type="PANTHER" id="PTHR33343">
    <property type="entry name" value="54S RIBOSOMAL PROTEIN BL35M"/>
    <property type="match status" value="1"/>
</dbReference>
<dbReference type="PANTHER" id="PTHR33343:SF1">
    <property type="entry name" value="LARGE RIBOSOMAL SUBUNIT PROTEIN BL35M"/>
    <property type="match status" value="1"/>
</dbReference>
<dbReference type="Pfam" id="PF01632">
    <property type="entry name" value="Ribosomal_L35p"/>
    <property type="match status" value="1"/>
</dbReference>
<dbReference type="PRINTS" id="PR00064">
    <property type="entry name" value="RIBOSOMALL35"/>
</dbReference>
<dbReference type="SUPFAM" id="SSF143034">
    <property type="entry name" value="L35p-like"/>
    <property type="match status" value="1"/>
</dbReference>
<dbReference type="PROSITE" id="PS00936">
    <property type="entry name" value="RIBOSOMAL_L35"/>
    <property type="match status" value="1"/>
</dbReference>
<gene>
    <name evidence="1" type="primary">rpmI</name>
    <name type="ordered locus">FTW_0614</name>
</gene>
<comment type="similarity">
    <text evidence="1">Belongs to the bacterial ribosomal protein bL35 family.</text>
</comment>
<sequence>MPKLKTKSGAAKRFKKTGKGGFKHRCANRAHINTKMTTKRKRHLRGMNQVAKVDTTSLVQQMPYA</sequence>
<protein>
    <recommendedName>
        <fullName evidence="1">Large ribosomal subunit protein bL35</fullName>
    </recommendedName>
    <alternativeName>
        <fullName evidence="3">50S ribosomal protein L35</fullName>
    </alternativeName>
</protein>
<organism>
    <name type="scientific">Francisella tularensis subsp. tularensis (strain WY96-3418)</name>
    <dbReference type="NCBI Taxonomy" id="418136"/>
    <lineage>
        <taxon>Bacteria</taxon>
        <taxon>Pseudomonadati</taxon>
        <taxon>Pseudomonadota</taxon>
        <taxon>Gammaproteobacteria</taxon>
        <taxon>Thiotrichales</taxon>
        <taxon>Francisellaceae</taxon>
        <taxon>Francisella</taxon>
    </lineage>
</organism>
<reference key="1">
    <citation type="journal article" date="2007" name="PLoS ONE">
        <title>Complete genomic characterization of a pathogenic A.II strain of Francisella tularensis subspecies tularensis.</title>
        <authorList>
            <person name="Beckstrom-Sternberg S.M."/>
            <person name="Auerbach R.K."/>
            <person name="Godbole S."/>
            <person name="Pearson J.V."/>
            <person name="Beckstrom-Sternberg J.S."/>
            <person name="Deng Z."/>
            <person name="Munk C."/>
            <person name="Kubota K."/>
            <person name="Zhou Y."/>
            <person name="Bruce D."/>
            <person name="Noronha J."/>
            <person name="Scheuermann R.H."/>
            <person name="Wang A."/>
            <person name="Wei X."/>
            <person name="Wang J."/>
            <person name="Hao J."/>
            <person name="Wagner D.M."/>
            <person name="Brettin T.S."/>
            <person name="Brown N."/>
            <person name="Gilna P."/>
            <person name="Keim P.S."/>
        </authorList>
    </citation>
    <scope>NUCLEOTIDE SEQUENCE [LARGE SCALE GENOMIC DNA]</scope>
    <source>
        <strain>WY96-3418</strain>
    </source>
</reference>
<feature type="chain" id="PRO_1000050694" description="Large ribosomal subunit protein bL35">
    <location>
        <begin position="1"/>
        <end position="65"/>
    </location>
</feature>
<feature type="region of interest" description="Disordered" evidence="2">
    <location>
        <begin position="1"/>
        <end position="23"/>
    </location>
</feature>
<feature type="region of interest" description="Disordered" evidence="2">
    <location>
        <begin position="36"/>
        <end position="65"/>
    </location>
</feature>
<feature type="compositionally biased region" description="Polar residues" evidence="2">
    <location>
        <begin position="54"/>
        <end position="65"/>
    </location>
</feature>
<evidence type="ECO:0000255" key="1">
    <source>
        <dbReference type="HAMAP-Rule" id="MF_00514"/>
    </source>
</evidence>
<evidence type="ECO:0000256" key="2">
    <source>
        <dbReference type="SAM" id="MobiDB-lite"/>
    </source>
</evidence>
<evidence type="ECO:0000305" key="3"/>
<proteinExistence type="inferred from homology"/>